<reference key="1">
    <citation type="journal article" date="2009" name="J. Bacteriol.">
        <title>Complete and draft genome sequences of six members of the Aquificales.</title>
        <authorList>
            <person name="Reysenbach A.-L."/>
            <person name="Hamamura N."/>
            <person name="Podar M."/>
            <person name="Griffiths E."/>
            <person name="Ferreira S."/>
            <person name="Hochstein R."/>
            <person name="Heidelberg J."/>
            <person name="Johnson J."/>
            <person name="Mead D."/>
            <person name="Pohorille A."/>
            <person name="Sarmiento M."/>
            <person name="Schweighofer K."/>
            <person name="Seshadri R."/>
            <person name="Voytek M.A."/>
        </authorList>
    </citation>
    <scope>NUCLEOTIDE SEQUENCE [LARGE SCALE GENOMIC DNA]</scope>
    <source>
        <strain>YO3AOP1</strain>
    </source>
</reference>
<gene>
    <name evidence="1" type="primary">rsmH</name>
    <name type="synonym">mraW</name>
    <name type="ordered locus">SYO3AOP1_1331</name>
</gene>
<accession>B2V5J5</accession>
<sequence length="293" mass="34119">MVEHYSVLHKEVLEFSKLIEGEVFVDATVGGGGHSYLILKQNLNLKLIGLDKDDYALKVAKERLKEFEDRITLVKSSFKDLDKVLQSLQIKEINGILFDFGVSTFQLKLERGFSFQREEFLDMRMDTTQKLTAYDIVNYYREQDLYNIIKTYGEEKFASKIAKSIVEYRKKKKIETTKELADIVYRCYPPNLRHGKIHPATRTFQAIRIEVNNELKDIEEGLEKAINLLAKNGIIMAISFHSLEDRIVKNMFKKYKELKFLEILTKKPITPSDEEIKENPASRSAKLRVGRRI</sequence>
<name>RSMH_SULSY</name>
<keyword id="KW-0963">Cytoplasm</keyword>
<keyword id="KW-0489">Methyltransferase</keyword>
<keyword id="KW-0698">rRNA processing</keyword>
<keyword id="KW-0949">S-adenosyl-L-methionine</keyword>
<keyword id="KW-0808">Transferase</keyword>
<comment type="function">
    <text evidence="1">Specifically methylates the N4 position of cytidine in position 1402 (C1402) of 16S rRNA.</text>
</comment>
<comment type="catalytic activity">
    <reaction evidence="1">
        <text>cytidine(1402) in 16S rRNA + S-adenosyl-L-methionine = N(4)-methylcytidine(1402) in 16S rRNA + S-adenosyl-L-homocysteine + H(+)</text>
        <dbReference type="Rhea" id="RHEA:42928"/>
        <dbReference type="Rhea" id="RHEA-COMP:10286"/>
        <dbReference type="Rhea" id="RHEA-COMP:10287"/>
        <dbReference type="ChEBI" id="CHEBI:15378"/>
        <dbReference type="ChEBI" id="CHEBI:57856"/>
        <dbReference type="ChEBI" id="CHEBI:59789"/>
        <dbReference type="ChEBI" id="CHEBI:74506"/>
        <dbReference type="ChEBI" id="CHEBI:82748"/>
        <dbReference type="EC" id="2.1.1.199"/>
    </reaction>
</comment>
<comment type="subcellular location">
    <subcellularLocation>
        <location evidence="1">Cytoplasm</location>
    </subcellularLocation>
</comment>
<comment type="similarity">
    <text evidence="1">Belongs to the methyltransferase superfamily. RsmH family.</text>
</comment>
<organism>
    <name type="scientific">Sulfurihydrogenibium sp. (strain YO3AOP1)</name>
    <dbReference type="NCBI Taxonomy" id="436114"/>
    <lineage>
        <taxon>Bacteria</taxon>
        <taxon>Pseudomonadati</taxon>
        <taxon>Aquificota</taxon>
        <taxon>Aquificia</taxon>
        <taxon>Aquificales</taxon>
        <taxon>Hydrogenothermaceae</taxon>
        <taxon>Sulfurihydrogenibium</taxon>
    </lineage>
</organism>
<evidence type="ECO:0000255" key="1">
    <source>
        <dbReference type="HAMAP-Rule" id="MF_01007"/>
    </source>
</evidence>
<evidence type="ECO:0000256" key="2">
    <source>
        <dbReference type="SAM" id="MobiDB-lite"/>
    </source>
</evidence>
<protein>
    <recommendedName>
        <fullName evidence="1">Ribosomal RNA small subunit methyltransferase H</fullName>
        <ecNumber evidence="1">2.1.1.199</ecNumber>
    </recommendedName>
    <alternativeName>
        <fullName evidence="1">16S rRNA m(4)C1402 methyltransferase</fullName>
    </alternativeName>
    <alternativeName>
        <fullName evidence="1">rRNA (cytosine-N(4)-)-methyltransferase RsmH</fullName>
    </alternativeName>
</protein>
<dbReference type="EC" id="2.1.1.199" evidence="1"/>
<dbReference type="EMBL" id="CP001080">
    <property type="protein sequence ID" value="ACD66939.1"/>
    <property type="molecule type" value="Genomic_DNA"/>
</dbReference>
<dbReference type="RefSeq" id="WP_012459998.1">
    <property type="nucleotide sequence ID" value="NC_010730.1"/>
</dbReference>
<dbReference type="SMR" id="B2V5J5"/>
<dbReference type="STRING" id="436114.SYO3AOP1_1331"/>
<dbReference type="KEGG" id="sul:SYO3AOP1_1331"/>
<dbReference type="eggNOG" id="COG0275">
    <property type="taxonomic scope" value="Bacteria"/>
</dbReference>
<dbReference type="HOGENOM" id="CLU_038422_2_0_0"/>
<dbReference type="GO" id="GO:0005737">
    <property type="term" value="C:cytoplasm"/>
    <property type="evidence" value="ECO:0007669"/>
    <property type="project" value="UniProtKB-SubCell"/>
</dbReference>
<dbReference type="GO" id="GO:0071424">
    <property type="term" value="F:rRNA (cytosine-N4-)-methyltransferase activity"/>
    <property type="evidence" value="ECO:0007669"/>
    <property type="project" value="UniProtKB-UniRule"/>
</dbReference>
<dbReference type="GO" id="GO:0070475">
    <property type="term" value="P:rRNA base methylation"/>
    <property type="evidence" value="ECO:0007669"/>
    <property type="project" value="UniProtKB-UniRule"/>
</dbReference>
<dbReference type="FunFam" id="1.10.150.170:FF:000003">
    <property type="entry name" value="Ribosomal RNA small subunit methyltransferase H"/>
    <property type="match status" value="1"/>
</dbReference>
<dbReference type="Gene3D" id="1.10.150.170">
    <property type="entry name" value="Putative methyltransferase TM0872, insert domain"/>
    <property type="match status" value="1"/>
</dbReference>
<dbReference type="Gene3D" id="3.40.50.150">
    <property type="entry name" value="Vaccinia Virus protein VP39"/>
    <property type="match status" value="1"/>
</dbReference>
<dbReference type="HAMAP" id="MF_01007">
    <property type="entry name" value="16SrRNA_methyltr_H"/>
    <property type="match status" value="1"/>
</dbReference>
<dbReference type="InterPro" id="IPR002903">
    <property type="entry name" value="RsmH"/>
</dbReference>
<dbReference type="InterPro" id="IPR023397">
    <property type="entry name" value="SAM-dep_MeTrfase_MraW_recog"/>
</dbReference>
<dbReference type="InterPro" id="IPR029063">
    <property type="entry name" value="SAM-dependent_MTases_sf"/>
</dbReference>
<dbReference type="NCBIfam" id="TIGR00006">
    <property type="entry name" value="16S rRNA (cytosine(1402)-N(4))-methyltransferase RsmH"/>
    <property type="match status" value="1"/>
</dbReference>
<dbReference type="PANTHER" id="PTHR11265:SF0">
    <property type="entry name" value="12S RRNA N4-METHYLCYTIDINE METHYLTRANSFERASE"/>
    <property type="match status" value="1"/>
</dbReference>
<dbReference type="PANTHER" id="PTHR11265">
    <property type="entry name" value="S-ADENOSYL-METHYLTRANSFERASE MRAW"/>
    <property type="match status" value="1"/>
</dbReference>
<dbReference type="Pfam" id="PF01795">
    <property type="entry name" value="Methyltransf_5"/>
    <property type="match status" value="1"/>
</dbReference>
<dbReference type="PIRSF" id="PIRSF004486">
    <property type="entry name" value="MraW"/>
    <property type="match status" value="1"/>
</dbReference>
<dbReference type="SUPFAM" id="SSF81799">
    <property type="entry name" value="Putative methyltransferase TM0872, insert domain"/>
    <property type="match status" value="1"/>
</dbReference>
<dbReference type="SUPFAM" id="SSF53335">
    <property type="entry name" value="S-adenosyl-L-methionine-dependent methyltransferases"/>
    <property type="match status" value="1"/>
</dbReference>
<proteinExistence type="inferred from homology"/>
<feature type="chain" id="PRO_0000387174" description="Ribosomal RNA small subunit methyltransferase H">
    <location>
        <begin position="1"/>
        <end position="293"/>
    </location>
</feature>
<feature type="region of interest" description="Disordered" evidence="2">
    <location>
        <begin position="272"/>
        <end position="293"/>
    </location>
</feature>
<feature type="binding site" evidence="1">
    <location>
        <begin position="32"/>
        <end position="34"/>
    </location>
    <ligand>
        <name>S-adenosyl-L-methionine</name>
        <dbReference type="ChEBI" id="CHEBI:59789"/>
    </ligand>
</feature>
<feature type="binding site" evidence="1">
    <location>
        <position position="51"/>
    </location>
    <ligand>
        <name>S-adenosyl-L-methionine</name>
        <dbReference type="ChEBI" id="CHEBI:59789"/>
    </ligand>
</feature>
<feature type="binding site" evidence="1">
    <location>
        <position position="78"/>
    </location>
    <ligand>
        <name>S-adenosyl-L-methionine</name>
        <dbReference type="ChEBI" id="CHEBI:59789"/>
    </ligand>
</feature>
<feature type="binding site" evidence="1">
    <location>
        <position position="99"/>
    </location>
    <ligand>
        <name>S-adenosyl-L-methionine</name>
        <dbReference type="ChEBI" id="CHEBI:59789"/>
    </ligand>
</feature>
<feature type="binding site" evidence="1">
    <location>
        <position position="106"/>
    </location>
    <ligand>
        <name>S-adenosyl-L-methionine</name>
        <dbReference type="ChEBI" id="CHEBI:59789"/>
    </ligand>
</feature>